<sequence length="221" mass="25851">MLSVIFHTMLQKIKSLILFRGESVDREVGKIFPPGHFYSPIPNIKEVRRREEKIFRVRTDNEVLGIDLNKEEQLKHLEIIGSYVDLFDYPETPEHNLKCIYYKNNGVFEKLDALAYFAFIIHYRPNRIVEIGSGFSSLIAMDVNKKFYNDKIEIALIEPYPSDYLRRGILFYRNAELIDQPVQDVDLSFFETLEENVISRNNFTPQSTTSRTQTPFQQAAS</sequence>
<name>Y310_ARCFU</name>
<organism>
    <name type="scientific">Archaeoglobus fulgidus (strain ATCC 49558 / DSM 4304 / JCM 9628 / NBRC 100126 / VC-16)</name>
    <dbReference type="NCBI Taxonomy" id="224325"/>
    <lineage>
        <taxon>Archaea</taxon>
        <taxon>Methanobacteriati</taxon>
        <taxon>Methanobacteriota</taxon>
        <taxon>Archaeoglobi</taxon>
        <taxon>Archaeoglobales</taxon>
        <taxon>Archaeoglobaceae</taxon>
        <taxon>Archaeoglobus</taxon>
    </lineage>
</organism>
<gene>
    <name type="ordered locus">AF_0310</name>
</gene>
<accession>O29934</accession>
<keyword id="KW-1185">Reference proteome</keyword>
<reference key="1">
    <citation type="journal article" date="1997" name="Nature">
        <title>The complete genome sequence of the hyperthermophilic, sulphate-reducing archaeon Archaeoglobus fulgidus.</title>
        <authorList>
            <person name="Klenk H.-P."/>
            <person name="Clayton R.A."/>
            <person name="Tomb J.-F."/>
            <person name="White O."/>
            <person name="Nelson K.E."/>
            <person name="Ketchum K.A."/>
            <person name="Dodson R.J."/>
            <person name="Gwinn M.L."/>
            <person name="Hickey E.K."/>
            <person name="Peterson J.D."/>
            <person name="Richardson D.L."/>
            <person name="Kerlavage A.R."/>
            <person name="Graham D.E."/>
            <person name="Kyrpides N.C."/>
            <person name="Fleischmann R.D."/>
            <person name="Quackenbush J."/>
            <person name="Lee N.H."/>
            <person name="Sutton G.G."/>
            <person name="Gill S.R."/>
            <person name="Kirkness E.F."/>
            <person name="Dougherty B.A."/>
            <person name="McKenney K."/>
            <person name="Adams M.D."/>
            <person name="Loftus B.J."/>
            <person name="Peterson S.N."/>
            <person name="Reich C.I."/>
            <person name="McNeil L.K."/>
            <person name="Badger J.H."/>
            <person name="Glodek A."/>
            <person name="Zhou L."/>
            <person name="Overbeek R."/>
            <person name="Gocayne J.D."/>
            <person name="Weidman J.F."/>
            <person name="McDonald L.A."/>
            <person name="Utterback T.R."/>
            <person name="Cotton M.D."/>
            <person name="Spriggs T."/>
            <person name="Artiach P."/>
            <person name="Kaine B.P."/>
            <person name="Sykes S.M."/>
            <person name="Sadow P.W."/>
            <person name="D'Andrea K.P."/>
            <person name="Bowman C."/>
            <person name="Fujii C."/>
            <person name="Garland S.A."/>
            <person name="Mason T.M."/>
            <person name="Olsen G.J."/>
            <person name="Fraser C.M."/>
            <person name="Smith H.O."/>
            <person name="Woese C.R."/>
            <person name="Venter J.C."/>
        </authorList>
    </citation>
    <scope>NUCLEOTIDE SEQUENCE [LARGE SCALE GENOMIC DNA]</scope>
    <source>
        <strain>ATCC 49558 / DSM 4304 / JCM 9628 / NBRC 100126 / VC-16</strain>
    </source>
</reference>
<feature type="chain" id="PRO_0000127865" description="Uncharacterized protein AF_0310">
    <location>
        <begin position="1"/>
        <end position="221"/>
    </location>
</feature>
<protein>
    <recommendedName>
        <fullName>Uncharacterized protein AF_0310</fullName>
    </recommendedName>
</protein>
<dbReference type="EMBL" id="AE000782">
    <property type="protein sequence ID" value="AAB90925.1"/>
    <property type="molecule type" value="Genomic_DNA"/>
</dbReference>
<dbReference type="PIR" id="F69288">
    <property type="entry name" value="F69288"/>
</dbReference>
<dbReference type="PaxDb" id="224325-AF_0310"/>
<dbReference type="DNASU" id="1483525"/>
<dbReference type="EnsemblBacteria" id="AAB90925">
    <property type="protein sequence ID" value="AAB90925"/>
    <property type="gene ID" value="AF_0310"/>
</dbReference>
<dbReference type="KEGG" id="afu:AF_0310"/>
<dbReference type="HOGENOM" id="CLU_1248222_0_0_2"/>
<dbReference type="Proteomes" id="UP000002199">
    <property type="component" value="Chromosome"/>
</dbReference>
<proteinExistence type="predicted"/>